<name>PUP_MYCTU</name>
<organism>
    <name type="scientific">Mycobacterium tuberculosis (strain ATCC 25618 / H37Rv)</name>
    <dbReference type="NCBI Taxonomy" id="83332"/>
    <lineage>
        <taxon>Bacteria</taxon>
        <taxon>Bacillati</taxon>
        <taxon>Actinomycetota</taxon>
        <taxon>Actinomycetes</taxon>
        <taxon>Mycobacteriales</taxon>
        <taxon>Mycobacteriaceae</taxon>
        <taxon>Mycobacterium</taxon>
        <taxon>Mycobacterium tuberculosis complex</taxon>
    </lineage>
</organism>
<proteinExistence type="evidence at protein level"/>
<evidence type="ECO:0000255" key="1"/>
<evidence type="ECO:0000256" key="2">
    <source>
        <dbReference type="SAM" id="MobiDB-lite"/>
    </source>
</evidence>
<evidence type="ECO:0000269" key="3">
    <source>
    </source>
</evidence>
<evidence type="ECO:0000269" key="4">
    <source>
    </source>
</evidence>
<evidence type="ECO:0000269" key="5">
    <source>
    </source>
</evidence>
<evidence type="ECO:0000269" key="6">
    <source>
    </source>
</evidence>
<evidence type="ECO:0000269" key="7">
    <source>
    </source>
</evidence>
<evidence type="ECO:0000269" key="8">
    <source>
    </source>
</evidence>
<evidence type="ECO:0000269" key="9">
    <source>
    </source>
</evidence>
<evidence type="ECO:0000305" key="10"/>
<evidence type="ECO:0007829" key="11">
    <source>
        <dbReference type="PDB" id="3M91"/>
    </source>
</evidence>
<evidence type="ECO:0007829" key="12">
    <source>
        <dbReference type="PDB" id="9CKU"/>
    </source>
</evidence>
<reference key="1">
    <citation type="journal article" date="2008" name="Science">
        <title>Ubiquitin-like protein involved in the proteasome pathway of Mycobacterium tuberculosis.</title>
        <authorList>
            <person name="Pearce M.J."/>
            <person name="Mintseris J."/>
            <person name="Ferreyra J."/>
            <person name="Gygi S.P."/>
            <person name="Darwin K.H."/>
        </authorList>
    </citation>
    <scope>NUCLEOTIDE SEQUENCE [GENOMIC DNA]</scope>
    <scope>FUNCTION</scope>
    <scope>ROLE IN THE PROTEASOME DEGRADATION PATHWAY</scope>
    <scope>CROSS-LINK SITE TO PROTEASOME SUBSTRATES</scope>
    <scope>INTERACTION WITH MPA</scope>
    <source>
        <strain>ATCC 25618 / H37Rv</strain>
    </source>
</reference>
<reference key="2">
    <citation type="journal article" date="1998" name="Nature">
        <title>Deciphering the biology of Mycobacterium tuberculosis from the complete genome sequence.</title>
        <authorList>
            <person name="Cole S.T."/>
            <person name="Brosch R."/>
            <person name="Parkhill J."/>
            <person name="Garnier T."/>
            <person name="Churcher C.M."/>
            <person name="Harris D.E."/>
            <person name="Gordon S.V."/>
            <person name="Eiglmeier K."/>
            <person name="Gas S."/>
            <person name="Barry C.E. III"/>
            <person name="Tekaia F."/>
            <person name="Badcock K."/>
            <person name="Basham D."/>
            <person name="Brown D."/>
            <person name="Chillingworth T."/>
            <person name="Connor R."/>
            <person name="Davies R.M."/>
            <person name="Devlin K."/>
            <person name="Feltwell T."/>
            <person name="Gentles S."/>
            <person name="Hamlin N."/>
            <person name="Holroyd S."/>
            <person name="Hornsby T."/>
            <person name="Jagels K."/>
            <person name="Krogh A."/>
            <person name="McLean J."/>
            <person name="Moule S."/>
            <person name="Murphy L.D."/>
            <person name="Oliver S."/>
            <person name="Osborne J."/>
            <person name="Quail M.A."/>
            <person name="Rajandream M.A."/>
            <person name="Rogers J."/>
            <person name="Rutter S."/>
            <person name="Seeger K."/>
            <person name="Skelton S."/>
            <person name="Squares S."/>
            <person name="Squares R."/>
            <person name="Sulston J.E."/>
            <person name="Taylor K."/>
            <person name="Whitehead S."/>
            <person name="Barrell B.G."/>
        </authorList>
    </citation>
    <scope>NUCLEOTIDE SEQUENCE [LARGE SCALE GENOMIC DNA]</scope>
    <source>
        <strain>ATCC 25618 / H37Rv</strain>
    </source>
</reference>
<reference key="3">
    <citation type="journal article" date="2006" name="EMBO J.">
        <title>Identification of substrates of the Mycobacterium tuberculosis proteasome.</title>
        <authorList>
            <person name="Pearce M.J."/>
            <person name="Arora P."/>
            <person name="Festa R.A."/>
            <person name="Butler-Wu S.M."/>
            <person name="Gokhale R.S."/>
            <person name="Darwin K.H."/>
        </authorList>
    </citation>
    <scope>PROTEIN SUBSTRATES</scope>
    <source>
        <strain>ATCC 25618 / H37Rv</strain>
    </source>
</reference>
<reference key="4">
    <citation type="journal article" date="2009" name="Biochem. J.">
        <title>Pup, a prokaryotic ubiquitin-like protein, is an intrinsically disordered protein.</title>
        <authorList>
            <person name="Liao S."/>
            <person name="Shang Q."/>
            <person name="Zhang X."/>
            <person name="Zhang J."/>
            <person name="Xu C."/>
            <person name="Tu X."/>
        </authorList>
    </citation>
    <scope>INTERACTION WITH MPA</scope>
    <scope>DOMAIN</scope>
    <scope>SPECTROSCOPIC STUDIES</scope>
</reference>
<reference key="5">
    <citation type="journal article" date="2009" name="FEBS Lett.">
        <title>A distinct structural region of the prokaryotic ubiquitin-like protein (Pup) is recognized by the N-terminal domain of the proteasomal ATPase Mpa.</title>
        <authorList>
            <person name="Sutter M."/>
            <person name="Striebel F."/>
            <person name="Damberger F.F."/>
            <person name="Allain F.H."/>
            <person name="Weber-Ban E."/>
        </authorList>
    </citation>
    <scope>INTERACTION WITH MPA</scope>
    <scope>STOICHIOMETRY OF THE PUP-MPA COMPLEX</scope>
    <scope>DOMAIN</scope>
    <source>
        <strain>ATCC 25618 / H37Rv</strain>
    </source>
</reference>
<reference key="6">
    <citation type="journal article" date="2009" name="J. Mol. Biol.">
        <title>Prokaryotic ubiquitin-like protein Pup is intrinsically disordered.</title>
        <authorList>
            <person name="Chen X."/>
            <person name="Solomon W.C."/>
            <person name="Kang Y."/>
            <person name="Cerda-Maira F."/>
            <person name="Darwin K.H."/>
            <person name="Walters K.J."/>
        </authorList>
    </citation>
    <scope>INTERACTION WITH MPA</scope>
    <scope>STOICHIOMETRY OF THE PUP-MPA COMPLEX</scope>
    <scope>DOMAIN</scope>
    <scope>SPECTROSCOPIC STUDIES</scope>
</reference>
<reference key="7">
    <citation type="journal article" date="2009" name="Nat. Struct. Mol. Biol.">
        <title>Bacterial ubiquitin-like modifier Pup is deamidated and conjugated to substrates by distinct but homologous enzymes.</title>
        <authorList>
            <person name="Striebel F."/>
            <person name="Imkamp F."/>
            <person name="Sutter M."/>
            <person name="Steiner M."/>
            <person name="Mamedov A."/>
            <person name="Weber-Ban E."/>
        </authorList>
    </citation>
    <scope>DEAMIDATION AT GLN-64 BY DOP</scope>
    <scope>ROLE IN THE PROTEASOME DEGRADATION PATHWAY</scope>
    <scope>INTERACTION WITH MPA; PAFA AND DOP</scope>
    <source>
        <strain>ATCC 25618 / H37Rv</strain>
    </source>
</reference>
<reference key="8">
    <citation type="journal article" date="2010" name="EMBO J.">
        <title>The mycobacterial Mpa-proteasome unfolds and degrades pupylated substrates by engaging Pup's N-terminus.</title>
        <authorList>
            <person name="Striebel F."/>
            <person name="Hunkeler M."/>
            <person name="Summer H."/>
            <person name="Weber-Ban E."/>
        </authorList>
    </citation>
    <scope>DOMAIN</scope>
    <scope>RECONSTITUTION OF THE PROTEASOME DEGRADATION PATHWAY</scope>
    <source>
        <strain>ATCC 25618 / H37Rv</strain>
    </source>
</reference>
<reference key="9">
    <citation type="journal article" date="2010" name="J. Am. Chem. Soc.">
        <title>Prokaryotic ubiquitin-like protein (Pup) is coupled to substrates via the side chain of its C-terminal glutamate.</title>
        <authorList>
            <person name="Sutter M."/>
            <person name="Damberger F.F."/>
            <person name="Imkamp F."/>
            <person name="Allain F.H."/>
            <person name="Weber-Ban E."/>
        </authorList>
    </citation>
    <scope>CROSS-LINK</scope>
    <source>
        <strain>ATCC 25618 / H37Rv</strain>
    </source>
</reference>
<reference key="10">
    <citation type="journal article" date="2010" name="J. Bacteriol.">
        <title>Prokaryotic ubiquitin-like protein provides a two-part degron to Mycobacterium proteasome substrates.</title>
        <authorList>
            <person name="Burns K.E."/>
            <person name="Pearce M.J."/>
            <person name="Darwin K.H."/>
        </authorList>
    </citation>
    <scope>FUNCTION IN THE PROTEASOME DEGRADATION PATHWAY</scope>
    <scope>DOMAIN</scope>
    <source>
        <strain>ATCC 25618 / H37Rv</strain>
    </source>
</reference>
<reference key="11">
    <citation type="journal article" date="2011" name="Mol. Cell. Proteomics">
        <title>Proteogenomic analysis of Mycobacterium tuberculosis by high resolution mass spectrometry.</title>
        <authorList>
            <person name="Kelkar D.S."/>
            <person name="Kumar D."/>
            <person name="Kumar P."/>
            <person name="Balakrishnan L."/>
            <person name="Muthusamy B."/>
            <person name="Yadav A.K."/>
            <person name="Shrivastava P."/>
            <person name="Marimuthu A."/>
            <person name="Anand S."/>
            <person name="Sundaram H."/>
            <person name="Kingsbury R."/>
            <person name="Harsha H.C."/>
            <person name="Nair B."/>
            <person name="Prasad T.S."/>
            <person name="Chauhan D.S."/>
            <person name="Katoch K."/>
            <person name="Katoch V.M."/>
            <person name="Kumar P."/>
            <person name="Chaerkady R."/>
            <person name="Ramachandran S."/>
            <person name="Dash D."/>
            <person name="Pandey A."/>
        </authorList>
    </citation>
    <scope>IDENTIFICATION BY MASS SPECTROMETRY [LARGE SCALE ANALYSIS]</scope>
    <source>
        <strain>ATCC 25618 / H37Rv</strain>
    </source>
</reference>
<gene>
    <name type="primary">pup</name>
    <name type="ordered locus">Rv2111c</name>
</gene>
<feature type="chain" id="PRO_0000383476" description="Prokaryotic ubiquitin-like protein Pup">
    <location>
        <begin position="1"/>
        <end position="64"/>
    </location>
</feature>
<feature type="region of interest" description="Disordered" evidence="2">
    <location>
        <begin position="1"/>
        <end position="37"/>
    </location>
</feature>
<feature type="region of interest" description="Mpa/ARC ATPase binding">
    <location>
        <begin position="21"/>
        <end position="58"/>
    </location>
</feature>
<feature type="coiled-coil region" evidence="1">
    <location>
        <begin position="23"/>
        <end position="52"/>
    </location>
</feature>
<feature type="modified residue" description="Deamidated glutamine; alternate" evidence="4">
    <location>
        <position position="64"/>
    </location>
</feature>
<feature type="cross-link" description="Isoglutamyl lysine isopeptide (Gln-Lys) (interchain with K-? in acceptor proteins); alternate">
    <location>
        <position position="64"/>
    </location>
</feature>
<feature type="helix" evidence="11">
    <location>
        <begin position="23"/>
        <end position="49"/>
    </location>
</feature>
<feature type="helix" evidence="12">
    <location>
        <begin position="51"/>
        <end position="57"/>
    </location>
</feature>
<dbReference type="EMBL" id="EU914921">
    <property type="protein sequence ID" value="ACI25441.1"/>
    <property type="molecule type" value="Genomic_DNA"/>
</dbReference>
<dbReference type="EMBL" id="AL123456">
    <property type="protein sequence ID" value="CCP44886.1"/>
    <property type="molecule type" value="Genomic_DNA"/>
</dbReference>
<dbReference type="PIR" id="B70512">
    <property type="entry name" value="B70512"/>
</dbReference>
<dbReference type="RefSeq" id="NP_216627.1">
    <property type="nucleotide sequence ID" value="NC_000962.3"/>
</dbReference>
<dbReference type="RefSeq" id="WP_003411026.1">
    <property type="nucleotide sequence ID" value="NZ_NVQJ01000058.1"/>
</dbReference>
<dbReference type="PDB" id="3M91">
    <property type="method" value="X-ray"/>
    <property type="resolution" value="1.80 A"/>
    <property type="chains" value="B/D=21-63"/>
</dbReference>
<dbReference type="PDB" id="3M9D">
    <property type="method" value="X-ray"/>
    <property type="resolution" value="4.50 A"/>
    <property type="chains" value="G/H/I/P/Q/R=1-64"/>
</dbReference>
<dbReference type="PDB" id="7PX9">
    <property type="method" value="EM"/>
    <property type="resolution" value="3.80 A"/>
    <property type="chains" value="G=1-64"/>
</dbReference>
<dbReference type="PDB" id="7PXB">
    <property type="method" value="EM"/>
    <property type="resolution" value="4.00 A"/>
    <property type="chains" value="G=1-64"/>
</dbReference>
<dbReference type="PDB" id="7PXC">
    <property type="method" value="EM"/>
    <property type="resolution" value="3.84 A"/>
    <property type="chains" value="G=1-64"/>
</dbReference>
<dbReference type="PDB" id="7PXD">
    <property type="method" value="EM"/>
    <property type="resolution" value="4.00 A"/>
    <property type="chains" value="G=1-64"/>
</dbReference>
<dbReference type="PDB" id="9CKU">
    <property type="method" value="EM"/>
    <property type="resolution" value="2.04 A"/>
    <property type="chains" value="H=2-64"/>
</dbReference>
<dbReference type="PDBsum" id="3M91"/>
<dbReference type="PDBsum" id="3M9D"/>
<dbReference type="PDBsum" id="7PX9"/>
<dbReference type="PDBsum" id="7PXB"/>
<dbReference type="PDBsum" id="7PXC"/>
<dbReference type="PDBsum" id="7PXD"/>
<dbReference type="PDBsum" id="9CKU"/>
<dbReference type="EMDB" id="EMD-13697"/>
<dbReference type="SMR" id="P9WHN5"/>
<dbReference type="FunCoup" id="P9WHN5">
    <property type="interactions" value="1"/>
</dbReference>
<dbReference type="IntAct" id="P9WHN5">
    <property type="interactions" value="1"/>
</dbReference>
<dbReference type="MINT" id="P9WHN5"/>
<dbReference type="STRING" id="83332.Rv2111c"/>
<dbReference type="PaxDb" id="83332-Rv2111c"/>
<dbReference type="DNASU" id="888788"/>
<dbReference type="GeneID" id="888788"/>
<dbReference type="KEGG" id="mtu:Rv2111c"/>
<dbReference type="KEGG" id="mtv:RVBD_2111c"/>
<dbReference type="TubercuList" id="Rv2111c"/>
<dbReference type="eggNOG" id="ENOG50333JS">
    <property type="taxonomic scope" value="Bacteria"/>
</dbReference>
<dbReference type="InParanoid" id="P9WHN5"/>
<dbReference type="BioCyc" id="MetaCyc:G185E-6317-MONOMER"/>
<dbReference type="UniPathway" id="UPA00997"/>
<dbReference type="Proteomes" id="UP000001584">
    <property type="component" value="Chromosome"/>
</dbReference>
<dbReference type="GO" id="GO:0060090">
    <property type="term" value="F:molecular adaptor activity"/>
    <property type="evidence" value="ECO:0000269"/>
    <property type="project" value="DisProt"/>
</dbReference>
<dbReference type="GO" id="GO:0070628">
    <property type="term" value="F:proteasome binding"/>
    <property type="evidence" value="ECO:0000314"/>
    <property type="project" value="UniProtKB"/>
</dbReference>
<dbReference type="GO" id="GO:0031386">
    <property type="term" value="F:protein tag activity"/>
    <property type="evidence" value="ECO:0000314"/>
    <property type="project" value="UniProtKB"/>
</dbReference>
<dbReference type="GO" id="GO:0019941">
    <property type="term" value="P:modification-dependent protein catabolic process"/>
    <property type="evidence" value="ECO:0000314"/>
    <property type="project" value="UniProtKB"/>
</dbReference>
<dbReference type="GO" id="GO:0010498">
    <property type="term" value="P:proteasomal protein catabolic process"/>
    <property type="evidence" value="ECO:0000314"/>
    <property type="project" value="UniProtKB"/>
</dbReference>
<dbReference type="GO" id="GO:0070490">
    <property type="term" value="P:protein pupylation"/>
    <property type="evidence" value="ECO:0000314"/>
    <property type="project" value="UniProtKB"/>
</dbReference>
<dbReference type="DisProt" id="DP00877"/>
<dbReference type="HAMAP" id="MF_02106">
    <property type="entry name" value="Pup"/>
    <property type="match status" value="1"/>
</dbReference>
<dbReference type="InterPro" id="IPR008515">
    <property type="entry name" value="Ubiquitin-like_Pup"/>
</dbReference>
<dbReference type="NCBIfam" id="TIGR03687">
    <property type="entry name" value="pupylate_cterm"/>
    <property type="match status" value="1"/>
</dbReference>
<dbReference type="Pfam" id="PF05639">
    <property type="entry name" value="Pup"/>
    <property type="match status" value="1"/>
</dbReference>
<sequence>MAQEQTKRGGGGGDDDDIAGSTAAGQERREKLTEETDDLLDEIDDVLEENAEDFVRAYVQKGGQ</sequence>
<comment type="function">
    <text evidence="3 4 9">Protein modifier that is covalently attached to lysine residues of substrate proteins, thereby targeting them for proteasomal degradation. The tagging system is termed pupylation. Among the identified substrates are the FabD, PanB and Mpa proteins.</text>
</comment>
<comment type="pathway">
    <text>Protein degradation; proteasomal Pup-dependent pathway.</text>
</comment>
<comment type="subunit">
    <text evidence="3 4 5 6 7">Strongly interacts with the proteasome-associated ATPase ARC (Mpa) through a hydrophobic interface; the interacting region of Pup lies in its C-terminal half. There is one Pup binding site per Mpa hexamer ring; the K(D) measured is about 3.8 uM.</text>
</comment>
<comment type="interaction">
    <interactant intactId="EBI-7241023">
        <id>P9WHN5</id>
    </interactant>
    <interactant intactId="EBI-7241067">
        <id>P9WQN5</id>
        <label>mpa</label>
    </interactant>
    <organismsDiffer>false</organismsDiffer>
    <experiments>6</experiments>
</comment>
<comment type="domain">
    <text evidence="5 6 7 8 9">The N-terminal unstructured half of Pup provides a signal required to initiate unfolding and degradation by the proteasome but is not needed for pupylation, while the C-terminal helical half of Pup interacts with Mpa to target proteins to the proteasome.</text>
</comment>
<comment type="PTM">
    <text evidence="4">Is modified by deamidation of its C-terminal glutamine to glutamate by the deamidase Dop, a prerequisite to the subsequent pupylation process.</text>
</comment>
<comment type="miscellaneous">
    <text>The glutamate must be located at the C-terminal position to be coupled to the lysine substrate.</text>
</comment>
<comment type="miscellaneous">
    <text>Fusion of Pup to a nonproteasome substrate targets it for proteasomal degradation in an Mpa- and proteasome-dependent manner.</text>
</comment>
<comment type="similarity">
    <text evidence="10">Belongs to the prokaryotic ubiquitin-like protein family.</text>
</comment>
<accession>P9WHN5</accession>
<accession>B6DAC1</accession>
<accession>L0TBK1</accession>
<accession>O33246</accession>
<accession>Q7D7I1</accession>
<protein>
    <recommendedName>
        <fullName>Prokaryotic ubiquitin-like protein Pup</fullName>
    </recommendedName>
    <alternativeName>
        <fullName>Bacterial ubiquitin-like modifier</fullName>
    </alternativeName>
</protein>
<keyword id="KW-0002">3D-structure</keyword>
<keyword id="KW-0175">Coiled coil</keyword>
<keyword id="KW-1017">Isopeptide bond</keyword>
<keyword id="KW-1185">Reference proteome</keyword>
<keyword id="KW-0833">Ubl conjugation pathway</keyword>